<accession>Q0HVZ0</accession>
<sequence length="102" mass="11721">MGKTGNIEHVEERVESELMPPSMYKVILNNDDYTPMDFVIEVLQIFFRKNEQEATDIMLTIHHQGKGICGIFPYGIAETKVIQVNQFARQNQHPLLCSLEKA</sequence>
<dbReference type="EMBL" id="CP000444">
    <property type="protein sequence ID" value="ABI42715.1"/>
    <property type="molecule type" value="Genomic_DNA"/>
</dbReference>
<dbReference type="SMR" id="Q0HVZ0"/>
<dbReference type="KEGG" id="shm:Shewmr7_1722"/>
<dbReference type="HOGENOM" id="CLU_134358_2_1_6"/>
<dbReference type="GO" id="GO:0030163">
    <property type="term" value="P:protein catabolic process"/>
    <property type="evidence" value="ECO:0007669"/>
    <property type="project" value="InterPro"/>
</dbReference>
<dbReference type="GO" id="GO:0006508">
    <property type="term" value="P:proteolysis"/>
    <property type="evidence" value="ECO:0007669"/>
    <property type="project" value="UniProtKB-UniRule"/>
</dbReference>
<dbReference type="FunFam" id="3.30.1390.10:FF:000002">
    <property type="entry name" value="ATP-dependent Clp protease adapter protein ClpS"/>
    <property type="match status" value="1"/>
</dbReference>
<dbReference type="Gene3D" id="3.30.1390.10">
    <property type="match status" value="1"/>
</dbReference>
<dbReference type="HAMAP" id="MF_00302">
    <property type="entry name" value="ClpS"/>
    <property type="match status" value="1"/>
</dbReference>
<dbReference type="InterPro" id="IPR022935">
    <property type="entry name" value="ClpS"/>
</dbReference>
<dbReference type="InterPro" id="IPR003769">
    <property type="entry name" value="ClpS_core"/>
</dbReference>
<dbReference type="InterPro" id="IPR014719">
    <property type="entry name" value="Ribosomal_bL12_C/ClpS-like"/>
</dbReference>
<dbReference type="NCBIfam" id="NF000670">
    <property type="entry name" value="PRK00033.1-3"/>
    <property type="match status" value="1"/>
</dbReference>
<dbReference type="NCBIfam" id="NF000672">
    <property type="entry name" value="PRK00033.1-5"/>
    <property type="match status" value="1"/>
</dbReference>
<dbReference type="PANTHER" id="PTHR33473:SF19">
    <property type="entry name" value="ATP-DEPENDENT CLP PROTEASE ADAPTER PROTEIN CLPS"/>
    <property type="match status" value="1"/>
</dbReference>
<dbReference type="PANTHER" id="PTHR33473">
    <property type="entry name" value="ATP-DEPENDENT CLP PROTEASE ADAPTER PROTEIN CLPS1, CHLOROPLASTIC"/>
    <property type="match status" value="1"/>
</dbReference>
<dbReference type="Pfam" id="PF02617">
    <property type="entry name" value="ClpS"/>
    <property type="match status" value="1"/>
</dbReference>
<dbReference type="SUPFAM" id="SSF54736">
    <property type="entry name" value="ClpS-like"/>
    <property type="match status" value="1"/>
</dbReference>
<proteinExistence type="inferred from homology"/>
<comment type="function">
    <text evidence="1">Involved in the modulation of the specificity of the ClpAP-mediated ATP-dependent protein degradation.</text>
</comment>
<comment type="subunit">
    <text evidence="1">Binds to the N-terminal domain of the chaperone ClpA.</text>
</comment>
<comment type="similarity">
    <text evidence="1">Belongs to the ClpS family.</text>
</comment>
<protein>
    <recommendedName>
        <fullName evidence="1">ATP-dependent Clp protease adapter protein ClpS</fullName>
    </recommendedName>
</protein>
<feature type="chain" id="PRO_1000022630" description="ATP-dependent Clp protease adapter protein ClpS">
    <location>
        <begin position="1"/>
        <end position="102"/>
    </location>
</feature>
<name>CLPS_SHESR</name>
<reference key="1">
    <citation type="submission" date="2006-08" db="EMBL/GenBank/DDBJ databases">
        <title>Complete sequence of chromosome 1 of Shewanella sp. MR-7.</title>
        <authorList>
            <person name="Copeland A."/>
            <person name="Lucas S."/>
            <person name="Lapidus A."/>
            <person name="Barry K."/>
            <person name="Detter J.C."/>
            <person name="Glavina del Rio T."/>
            <person name="Hammon N."/>
            <person name="Israni S."/>
            <person name="Dalin E."/>
            <person name="Tice H."/>
            <person name="Pitluck S."/>
            <person name="Kiss H."/>
            <person name="Brettin T."/>
            <person name="Bruce D."/>
            <person name="Han C."/>
            <person name="Tapia R."/>
            <person name="Gilna P."/>
            <person name="Schmutz J."/>
            <person name="Larimer F."/>
            <person name="Land M."/>
            <person name="Hauser L."/>
            <person name="Kyrpides N."/>
            <person name="Mikhailova N."/>
            <person name="Nealson K."/>
            <person name="Konstantinidis K."/>
            <person name="Klappenbach J."/>
            <person name="Tiedje J."/>
            <person name="Richardson P."/>
        </authorList>
    </citation>
    <scope>NUCLEOTIDE SEQUENCE [LARGE SCALE GENOMIC DNA]</scope>
    <source>
        <strain>MR-7</strain>
    </source>
</reference>
<evidence type="ECO:0000255" key="1">
    <source>
        <dbReference type="HAMAP-Rule" id="MF_00302"/>
    </source>
</evidence>
<gene>
    <name evidence="1" type="primary">clpS</name>
    <name type="ordered locus">Shewmr7_1722</name>
</gene>
<organism>
    <name type="scientific">Shewanella sp. (strain MR-7)</name>
    <dbReference type="NCBI Taxonomy" id="60481"/>
    <lineage>
        <taxon>Bacteria</taxon>
        <taxon>Pseudomonadati</taxon>
        <taxon>Pseudomonadota</taxon>
        <taxon>Gammaproteobacteria</taxon>
        <taxon>Alteromonadales</taxon>
        <taxon>Shewanellaceae</taxon>
        <taxon>Shewanella</taxon>
    </lineage>
</organism>